<accession>Q7VQE6</accession>
<proteinExistence type="inferred from homology"/>
<reference key="1">
    <citation type="journal article" date="2003" name="Proc. Natl. Acad. Sci. U.S.A.">
        <title>The genome sequence of Blochmannia floridanus: comparative analysis of reduced genomes.</title>
        <authorList>
            <person name="Gil R."/>
            <person name="Silva F.J."/>
            <person name="Zientz E."/>
            <person name="Delmotte F."/>
            <person name="Gonzalez-Candelas F."/>
            <person name="Latorre A."/>
            <person name="Rausell C."/>
            <person name="Kamerbeek J."/>
            <person name="Gadau J."/>
            <person name="Hoelldobler B."/>
            <person name="van Ham R.C.H.J."/>
            <person name="Gross R."/>
            <person name="Moya A."/>
        </authorList>
    </citation>
    <scope>NUCLEOTIDE SEQUENCE [LARGE SCALE GENOMIC DNA]</scope>
</reference>
<feature type="chain" id="PRO_0000272708" description="Large ribosomal subunit protein uL23">
    <location>
        <begin position="1"/>
        <end position="99"/>
    </location>
</feature>
<dbReference type="EMBL" id="BX248583">
    <property type="protein sequence ID" value="CAD83708.1"/>
    <property type="molecule type" value="Genomic_DNA"/>
</dbReference>
<dbReference type="SMR" id="Q7VQE6"/>
<dbReference type="STRING" id="203907.Bfl193"/>
<dbReference type="KEGG" id="bfl:Bfl193"/>
<dbReference type="eggNOG" id="COG0089">
    <property type="taxonomic scope" value="Bacteria"/>
</dbReference>
<dbReference type="HOGENOM" id="CLU_037562_3_1_6"/>
<dbReference type="OrthoDB" id="9793353at2"/>
<dbReference type="Proteomes" id="UP000002192">
    <property type="component" value="Chromosome"/>
</dbReference>
<dbReference type="GO" id="GO:1990904">
    <property type="term" value="C:ribonucleoprotein complex"/>
    <property type="evidence" value="ECO:0007669"/>
    <property type="project" value="UniProtKB-KW"/>
</dbReference>
<dbReference type="GO" id="GO:0005840">
    <property type="term" value="C:ribosome"/>
    <property type="evidence" value="ECO:0007669"/>
    <property type="project" value="UniProtKB-KW"/>
</dbReference>
<dbReference type="GO" id="GO:0019843">
    <property type="term" value="F:rRNA binding"/>
    <property type="evidence" value="ECO:0007669"/>
    <property type="project" value="UniProtKB-UniRule"/>
</dbReference>
<dbReference type="GO" id="GO:0003735">
    <property type="term" value="F:structural constituent of ribosome"/>
    <property type="evidence" value="ECO:0007669"/>
    <property type="project" value="InterPro"/>
</dbReference>
<dbReference type="GO" id="GO:0006412">
    <property type="term" value="P:translation"/>
    <property type="evidence" value="ECO:0007669"/>
    <property type="project" value="UniProtKB-UniRule"/>
</dbReference>
<dbReference type="Gene3D" id="3.30.70.330">
    <property type="match status" value="1"/>
</dbReference>
<dbReference type="HAMAP" id="MF_01369_B">
    <property type="entry name" value="Ribosomal_uL23_B"/>
    <property type="match status" value="1"/>
</dbReference>
<dbReference type="InterPro" id="IPR012677">
    <property type="entry name" value="Nucleotide-bd_a/b_plait_sf"/>
</dbReference>
<dbReference type="InterPro" id="IPR013025">
    <property type="entry name" value="Ribosomal_uL23-like"/>
</dbReference>
<dbReference type="InterPro" id="IPR012678">
    <property type="entry name" value="Ribosomal_uL23/eL15/eS24_sf"/>
</dbReference>
<dbReference type="NCBIfam" id="NF004359">
    <property type="entry name" value="PRK05738.1-3"/>
    <property type="match status" value="1"/>
</dbReference>
<dbReference type="PANTHER" id="PTHR11620">
    <property type="entry name" value="60S RIBOSOMAL PROTEIN L23A"/>
    <property type="match status" value="1"/>
</dbReference>
<dbReference type="Pfam" id="PF00276">
    <property type="entry name" value="Ribosomal_L23"/>
    <property type="match status" value="1"/>
</dbReference>
<dbReference type="SUPFAM" id="SSF54189">
    <property type="entry name" value="Ribosomal proteins S24e, L23 and L15e"/>
    <property type="match status" value="1"/>
</dbReference>
<sequence length="99" mass="11505">MYIERLLKVIKAPHVSEKSSIALDKNNVIVLKVVNYVTKQDIRHAVCMLFSVKIKKINVLMVSGKSKGQRYNLGYRCNWKKAYVILKRGYTVDLMNMEQ</sequence>
<evidence type="ECO:0000255" key="1">
    <source>
        <dbReference type="HAMAP-Rule" id="MF_01369"/>
    </source>
</evidence>
<evidence type="ECO:0000305" key="2"/>
<organism>
    <name type="scientific">Blochmanniella floridana</name>
    <dbReference type="NCBI Taxonomy" id="203907"/>
    <lineage>
        <taxon>Bacteria</taxon>
        <taxon>Pseudomonadati</taxon>
        <taxon>Pseudomonadota</taxon>
        <taxon>Gammaproteobacteria</taxon>
        <taxon>Enterobacterales</taxon>
        <taxon>Enterobacteriaceae</taxon>
        <taxon>ant endosymbionts</taxon>
        <taxon>Candidatus Blochmanniella</taxon>
    </lineage>
</organism>
<comment type="function">
    <text evidence="1">One of the early assembly proteins it binds 23S rRNA. One of the proteins that surrounds the polypeptide exit tunnel on the outside of the ribosome. Forms the main docking site for trigger factor binding to the ribosome.</text>
</comment>
<comment type="subunit">
    <text evidence="1">Part of the 50S ribosomal subunit. Contacts protein L29, and trigger factor when it is bound to the ribosome.</text>
</comment>
<comment type="similarity">
    <text evidence="1">Belongs to the universal ribosomal protein uL23 family.</text>
</comment>
<gene>
    <name evidence="1" type="primary">rplW</name>
    <name type="ordered locus">Bfl193</name>
</gene>
<keyword id="KW-1185">Reference proteome</keyword>
<keyword id="KW-0687">Ribonucleoprotein</keyword>
<keyword id="KW-0689">Ribosomal protein</keyword>
<keyword id="KW-0694">RNA-binding</keyword>
<keyword id="KW-0699">rRNA-binding</keyword>
<name>RL23_BLOFL</name>
<protein>
    <recommendedName>
        <fullName evidence="1">Large ribosomal subunit protein uL23</fullName>
    </recommendedName>
    <alternativeName>
        <fullName evidence="2">50S ribosomal protein L23</fullName>
    </alternativeName>
</protein>